<sequence length="100" mass="11959">MAKKSMIEREKKRSRLIAKYADKRAELKEQLRQAEDLDDKIEIQRQLQRLPRNSAPSRHRNRCWVTGRPRGYYRDFGLSRNVLREWAHQGLLPGVVKSSW</sequence>
<protein>
    <recommendedName>
        <fullName evidence="1">Small ribosomal subunit protein uS14</fullName>
    </recommendedName>
    <alternativeName>
        <fullName evidence="2">30S ribosomal protein S14</fullName>
    </alternativeName>
</protein>
<evidence type="ECO:0000255" key="1">
    <source>
        <dbReference type="HAMAP-Rule" id="MF_00537"/>
    </source>
</evidence>
<evidence type="ECO:0000305" key="2"/>
<comment type="function">
    <text evidence="1">Binds 16S rRNA, required for the assembly of 30S particles and may also be responsible for determining the conformation of the 16S rRNA at the A site.</text>
</comment>
<comment type="subunit">
    <text evidence="1">Part of the 30S ribosomal subunit. Contacts proteins S3 and S10.</text>
</comment>
<comment type="similarity">
    <text evidence="1">Belongs to the universal ribosomal protein uS14 family.</text>
</comment>
<name>RS14_GLOC7</name>
<proteinExistence type="inferred from homology"/>
<reference key="1">
    <citation type="journal article" date="2011" name="MBio">
        <title>Novel metabolic attributes of the genus Cyanothece, comprising a group of unicellular nitrogen-fixing Cyanobacteria.</title>
        <authorList>
            <person name="Bandyopadhyay A."/>
            <person name="Elvitigala T."/>
            <person name="Welsh E."/>
            <person name="Stockel J."/>
            <person name="Liberton M."/>
            <person name="Min H."/>
            <person name="Sherman L.A."/>
            <person name="Pakrasi H.B."/>
        </authorList>
    </citation>
    <scope>NUCLEOTIDE SEQUENCE [LARGE SCALE GENOMIC DNA]</scope>
    <source>
        <strain>PCC 7424</strain>
    </source>
</reference>
<accession>B7K8N1</accession>
<keyword id="KW-1185">Reference proteome</keyword>
<keyword id="KW-0687">Ribonucleoprotein</keyword>
<keyword id="KW-0689">Ribosomal protein</keyword>
<keyword id="KW-0694">RNA-binding</keyword>
<keyword id="KW-0699">rRNA-binding</keyword>
<gene>
    <name evidence="1" type="primary">rpsN</name>
    <name evidence="1" type="synonym">rps14</name>
    <name type="ordered locus">PCC7424_2822</name>
</gene>
<dbReference type="EMBL" id="CP001291">
    <property type="protein sequence ID" value="ACK71229.1"/>
    <property type="molecule type" value="Genomic_DNA"/>
</dbReference>
<dbReference type="RefSeq" id="WP_015954829.1">
    <property type="nucleotide sequence ID" value="NC_011729.1"/>
</dbReference>
<dbReference type="SMR" id="B7K8N1"/>
<dbReference type="STRING" id="65393.PCC7424_2822"/>
<dbReference type="KEGG" id="cyc:PCC7424_2822"/>
<dbReference type="eggNOG" id="COG0199">
    <property type="taxonomic scope" value="Bacteria"/>
</dbReference>
<dbReference type="HOGENOM" id="CLU_139869_0_1_3"/>
<dbReference type="OrthoDB" id="9810484at2"/>
<dbReference type="Proteomes" id="UP000002384">
    <property type="component" value="Chromosome"/>
</dbReference>
<dbReference type="GO" id="GO:0005737">
    <property type="term" value="C:cytoplasm"/>
    <property type="evidence" value="ECO:0007669"/>
    <property type="project" value="UniProtKB-ARBA"/>
</dbReference>
<dbReference type="GO" id="GO:0015935">
    <property type="term" value="C:small ribosomal subunit"/>
    <property type="evidence" value="ECO:0007669"/>
    <property type="project" value="TreeGrafter"/>
</dbReference>
<dbReference type="GO" id="GO:0019843">
    <property type="term" value="F:rRNA binding"/>
    <property type="evidence" value="ECO:0007669"/>
    <property type="project" value="UniProtKB-UniRule"/>
</dbReference>
<dbReference type="GO" id="GO:0003735">
    <property type="term" value="F:structural constituent of ribosome"/>
    <property type="evidence" value="ECO:0007669"/>
    <property type="project" value="InterPro"/>
</dbReference>
<dbReference type="GO" id="GO:0006412">
    <property type="term" value="P:translation"/>
    <property type="evidence" value="ECO:0007669"/>
    <property type="project" value="UniProtKB-UniRule"/>
</dbReference>
<dbReference type="FunFam" id="1.10.287.1480:FF:000001">
    <property type="entry name" value="30S ribosomal protein S14"/>
    <property type="match status" value="1"/>
</dbReference>
<dbReference type="Gene3D" id="1.10.287.1480">
    <property type="match status" value="1"/>
</dbReference>
<dbReference type="HAMAP" id="MF_00537">
    <property type="entry name" value="Ribosomal_uS14_1"/>
    <property type="match status" value="1"/>
</dbReference>
<dbReference type="InterPro" id="IPR001209">
    <property type="entry name" value="Ribosomal_uS14"/>
</dbReference>
<dbReference type="InterPro" id="IPR023036">
    <property type="entry name" value="Ribosomal_uS14_bac/plastid"/>
</dbReference>
<dbReference type="InterPro" id="IPR018271">
    <property type="entry name" value="Ribosomal_uS14_CS"/>
</dbReference>
<dbReference type="NCBIfam" id="NF006477">
    <property type="entry name" value="PRK08881.1"/>
    <property type="match status" value="1"/>
</dbReference>
<dbReference type="PANTHER" id="PTHR19836">
    <property type="entry name" value="30S RIBOSOMAL PROTEIN S14"/>
    <property type="match status" value="1"/>
</dbReference>
<dbReference type="PANTHER" id="PTHR19836:SF19">
    <property type="entry name" value="SMALL RIBOSOMAL SUBUNIT PROTEIN US14M"/>
    <property type="match status" value="1"/>
</dbReference>
<dbReference type="Pfam" id="PF00253">
    <property type="entry name" value="Ribosomal_S14"/>
    <property type="match status" value="1"/>
</dbReference>
<dbReference type="SUPFAM" id="SSF57716">
    <property type="entry name" value="Glucocorticoid receptor-like (DNA-binding domain)"/>
    <property type="match status" value="1"/>
</dbReference>
<dbReference type="PROSITE" id="PS00527">
    <property type="entry name" value="RIBOSOMAL_S14"/>
    <property type="match status" value="1"/>
</dbReference>
<organism>
    <name type="scientific">Gloeothece citriformis (strain PCC 7424)</name>
    <name type="common">Cyanothece sp. (strain PCC 7424)</name>
    <dbReference type="NCBI Taxonomy" id="65393"/>
    <lineage>
        <taxon>Bacteria</taxon>
        <taxon>Bacillati</taxon>
        <taxon>Cyanobacteriota</taxon>
        <taxon>Cyanophyceae</taxon>
        <taxon>Oscillatoriophycideae</taxon>
        <taxon>Chroococcales</taxon>
        <taxon>Aphanothecaceae</taxon>
        <taxon>Gloeothece</taxon>
        <taxon>Gloeothece citriformis</taxon>
    </lineage>
</organism>
<feature type="chain" id="PRO_1000128375" description="Small ribosomal subunit protein uS14">
    <location>
        <begin position="1"/>
        <end position="100"/>
    </location>
</feature>